<dbReference type="EMBL" id="CP000962">
    <property type="protein sequence ID" value="ACA55472.1"/>
    <property type="molecule type" value="Genomic_DNA"/>
</dbReference>
<dbReference type="RefSeq" id="WP_012343447.1">
    <property type="nucleotide sequence ID" value="NC_010520.1"/>
</dbReference>
<dbReference type="SMR" id="B1KSK6"/>
<dbReference type="KEGG" id="cbl:CLK_2905"/>
<dbReference type="HOGENOM" id="CLU_055188_4_2_9"/>
<dbReference type="GO" id="GO:0022625">
    <property type="term" value="C:cytosolic large ribosomal subunit"/>
    <property type="evidence" value="ECO:0007669"/>
    <property type="project" value="TreeGrafter"/>
</dbReference>
<dbReference type="GO" id="GO:0019843">
    <property type="term" value="F:rRNA binding"/>
    <property type="evidence" value="ECO:0007669"/>
    <property type="project" value="UniProtKB-UniRule"/>
</dbReference>
<dbReference type="GO" id="GO:0003735">
    <property type="term" value="F:structural constituent of ribosome"/>
    <property type="evidence" value="ECO:0007669"/>
    <property type="project" value="InterPro"/>
</dbReference>
<dbReference type="GO" id="GO:0006412">
    <property type="term" value="P:translation"/>
    <property type="evidence" value="ECO:0007669"/>
    <property type="project" value="UniProtKB-UniRule"/>
</dbReference>
<dbReference type="Gene3D" id="3.100.10.10">
    <property type="match status" value="1"/>
</dbReference>
<dbReference type="HAMAP" id="MF_01341">
    <property type="entry name" value="Ribosomal_uL15"/>
    <property type="match status" value="1"/>
</dbReference>
<dbReference type="InterPro" id="IPR030878">
    <property type="entry name" value="Ribosomal_uL15"/>
</dbReference>
<dbReference type="InterPro" id="IPR021131">
    <property type="entry name" value="Ribosomal_uL15/eL18"/>
</dbReference>
<dbReference type="InterPro" id="IPR036227">
    <property type="entry name" value="Ribosomal_uL15/eL18_sf"/>
</dbReference>
<dbReference type="InterPro" id="IPR005749">
    <property type="entry name" value="Ribosomal_uL15_bac-type"/>
</dbReference>
<dbReference type="InterPro" id="IPR001196">
    <property type="entry name" value="Ribosomal_uL15_CS"/>
</dbReference>
<dbReference type="NCBIfam" id="TIGR01071">
    <property type="entry name" value="rplO_bact"/>
    <property type="match status" value="1"/>
</dbReference>
<dbReference type="PANTHER" id="PTHR12934">
    <property type="entry name" value="50S RIBOSOMAL PROTEIN L15"/>
    <property type="match status" value="1"/>
</dbReference>
<dbReference type="PANTHER" id="PTHR12934:SF11">
    <property type="entry name" value="LARGE RIBOSOMAL SUBUNIT PROTEIN UL15M"/>
    <property type="match status" value="1"/>
</dbReference>
<dbReference type="Pfam" id="PF00828">
    <property type="entry name" value="Ribosomal_L27A"/>
    <property type="match status" value="1"/>
</dbReference>
<dbReference type="SUPFAM" id="SSF52080">
    <property type="entry name" value="Ribosomal proteins L15p and L18e"/>
    <property type="match status" value="1"/>
</dbReference>
<dbReference type="PROSITE" id="PS00475">
    <property type="entry name" value="RIBOSOMAL_L15"/>
    <property type="match status" value="1"/>
</dbReference>
<comment type="function">
    <text evidence="1">Binds to the 23S rRNA.</text>
</comment>
<comment type="subunit">
    <text evidence="1">Part of the 50S ribosomal subunit.</text>
</comment>
<comment type="similarity">
    <text evidence="1">Belongs to the universal ribosomal protein uL15 family.</text>
</comment>
<evidence type="ECO:0000255" key="1">
    <source>
        <dbReference type="HAMAP-Rule" id="MF_01341"/>
    </source>
</evidence>
<evidence type="ECO:0000256" key="2">
    <source>
        <dbReference type="SAM" id="MobiDB-lite"/>
    </source>
</evidence>
<evidence type="ECO:0000305" key="3"/>
<organism>
    <name type="scientific">Clostridium botulinum (strain Loch Maree / Type A3)</name>
    <dbReference type="NCBI Taxonomy" id="498214"/>
    <lineage>
        <taxon>Bacteria</taxon>
        <taxon>Bacillati</taxon>
        <taxon>Bacillota</taxon>
        <taxon>Clostridia</taxon>
        <taxon>Eubacteriales</taxon>
        <taxon>Clostridiaceae</taxon>
        <taxon>Clostridium</taxon>
    </lineage>
</organism>
<protein>
    <recommendedName>
        <fullName evidence="1">Large ribosomal subunit protein uL15</fullName>
    </recommendedName>
    <alternativeName>
        <fullName evidence="3">50S ribosomal protein L15</fullName>
    </alternativeName>
</protein>
<reference key="1">
    <citation type="journal article" date="2007" name="PLoS ONE">
        <title>Analysis of the neurotoxin complex genes in Clostridium botulinum A1-A4 and B1 strains: BoNT/A3, /Ba4 and /B1 clusters are located within plasmids.</title>
        <authorList>
            <person name="Smith T.J."/>
            <person name="Hill K.K."/>
            <person name="Foley B.T."/>
            <person name="Detter J.C."/>
            <person name="Munk A.C."/>
            <person name="Bruce D.C."/>
            <person name="Doggett N.A."/>
            <person name="Smith L.A."/>
            <person name="Marks J.D."/>
            <person name="Xie G."/>
            <person name="Brettin T.S."/>
        </authorList>
    </citation>
    <scope>NUCLEOTIDE SEQUENCE [LARGE SCALE GENOMIC DNA]</scope>
    <source>
        <strain>Loch Maree / Type A3</strain>
    </source>
</reference>
<proteinExistence type="inferred from homology"/>
<keyword id="KW-0687">Ribonucleoprotein</keyword>
<keyword id="KW-0689">Ribosomal protein</keyword>
<keyword id="KW-0694">RNA-binding</keyword>
<keyword id="KW-0699">rRNA-binding</keyword>
<accession>B1KSK6</accession>
<name>RL15_CLOBM</name>
<gene>
    <name evidence="1" type="primary">rplO</name>
    <name type="ordered locus">CLK_2905</name>
</gene>
<feature type="chain" id="PRO_1000142797" description="Large ribosomal subunit protein uL15">
    <location>
        <begin position="1"/>
        <end position="146"/>
    </location>
</feature>
<feature type="region of interest" description="Disordered" evidence="2">
    <location>
        <begin position="1"/>
        <end position="56"/>
    </location>
</feature>
<feature type="compositionally biased region" description="Gly residues" evidence="2">
    <location>
        <begin position="21"/>
        <end position="35"/>
    </location>
</feature>
<feature type="compositionally biased region" description="Gly residues" evidence="2">
    <location>
        <begin position="42"/>
        <end position="52"/>
    </location>
</feature>
<sequence>MKLHELRAAEGANKASKRVGRGTGSGLGKTSGKGQNGQNSRSGGGVRPGFEGGQMPLYRRLPKRGFKNIFAKEYAAINLDRLNCFEDGTVVTPELLVEKRVVKKVKDGVKILGNGNIEKKLTVKAAKFSKSAIEKIEAAGGKVEVI</sequence>